<name>OPRX_MOUSE</name>
<dbReference type="EMBL" id="U04952">
    <property type="protein sequence ID" value="AAA03730.1"/>
    <property type="molecule type" value="mRNA"/>
</dbReference>
<dbReference type="EMBL" id="D31667">
    <property type="protein sequence ID" value="BAA06509.1"/>
    <property type="molecule type" value="Genomic_DNA"/>
</dbReference>
<dbReference type="EMBL" id="X91813">
    <property type="protein sequence ID" value="CAA62922.1"/>
    <property type="molecule type" value="mRNA"/>
</dbReference>
<dbReference type="EMBL" id="U32932">
    <property type="protein sequence ID" value="AAC52669.1"/>
    <property type="molecule type" value="Genomic_DNA"/>
</dbReference>
<dbReference type="EMBL" id="U32928">
    <property type="protein sequence ID" value="AAC52669.1"/>
    <property type="status" value="JOINED"/>
    <property type="molecule type" value="Genomic_DNA"/>
</dbReference>
<dbReference type="EMBL" id="U32930">
    <property type="protein sequence ID" value="AAC52669.1"/>
    <property type="status" value="JOINED"/>
    <property type="molecule type" value="Genomic_DNA"/>
</dbReference>
<dbReference type="EMBL" id="U09421">
    <property type="protein sequence ID" value="AAA81333.1"/>
    <property type="molecule type" value="mRNA"/>
</dbReference>
<dbReference type="EMBL" id="AF043276">
    <property type="protein sequence ID" value="AAC64507.1"/>
    <property type="molecule type" value="mRNA"/>
</dbReference>
<dbReference type="EMBL" id="AF043277">
    <property type="protein sequence ID" value="AAC64508.1"/>
    <property type="molecule type" value="mRNA"/>
</dbReference>
<dbReference type="EMBL" id="AF043278">
    <property type="protein sequence ID" value="AAC64509.1"/>
    <property type="molecule type" value="mRNA"/>
</dbReference>
<dbReference type="EMBL" id="AF062381">
    <property type="protein sequence ID" value="AAF21258.1"/>
    <property type="molecule type" value="mRNA"/>
</dbReference>
<dbReference type="EMBL" id="AF075605">
    <property type="protein sequence ID" value="AAF21781.1"/>
    <property type="molecule type" value="mRNA"/>
</dbReference>
<dbReference type="EMBL" id="AF126469">
    <property type="protein sequence ID" value="AAL54889.1"/>
    <property type="molecule type" value="mRNA"/>
</dbReference>
<dbReference type="EMBL" id="BC050885">
    <property type="protein sequence ID" value="AAH50885.1"/>
    <property type="molecule type" value="mRNA"/>
</dbReference>
<dbReference type="EMBL" id="U14165">
    <property type="protein sequence ID" value="AAA87899.1"/>
    <property type="molecule type" value="mRNA"/>
</dbReference>
<dbReference type="CCDS" id="CCDS17222.1">
    <molecule id="P35377-1"/>
</dbReference>
<dbReference type="PIR" id="I49022">
    <property type="entry name" value="I49022"/>
</dbReference>
<dbReference type="PIR" id="JC2421">
    <property type="entry name" value="JC2421"/>
</dbReference>
<dbReference type="RefSeq" id="NP_001239494.1">
    <molecule id="P35377-1"/>
    <property type="nucleotide sequence ID" value="NM_001252565.2"/>
</dbReference>
<dbReference type="RefSeq" id="NP_001305848.1">
    <property type="nucleotide sequence ID" value="NM_001318919.1"/>
</dbReference>
<dbReference type="RefSeq" id="NP_001305849.1">
    <molecule id="P35377-5"/>
    <property type="nucleotide sequence ID" value="NM_001318920.2"/>
</dbReference>
<dbReference type="RefSeq" id="NP_001407426.1">
    <molecule id="P35377-5"/>
    <property type="nucleotide sequence ID" value="NM_001420497.1"/>
</dbReference>
<dbReference type="RefSeq" id="NP_035142.1">
    <molecule id="P35377-1"/>
    <property type="nucleotide sequence ID" value="NM_011012.6"/>
</dbReference>
<dbReference type="RefSeq" id="XP_006500645.1">
    <property type="nucleotide sequence ID" value="XM_006500582.2"/>
</dbReference>
<dbReference type="RefSeq" id="XP_017171812.1">
    <property type="nucleotide sequence ID" value="XM_017316323.1"/>
</dbReference>
<dbReference type="RefSeq" id="XP_017171814.1">
    <molecule id="P35377-1"/>
    <property type="nucleotide sequence ID" value="XM_017316325.2"/>
</dbReference>
<dbReference type="RefSeq" id="XP_036015363.1">
    <molecule id="P35377-5"/>
    <property type="nucleotide sequence ID" value="XM_036159470.1"/>
</dbReference>
<dbReference type="SMR" id="P35377"/>
<dbReference type="CORUM" id="P35377"/>
<dbReference type="FunCoup" id="P35377">
    <property type="interactions" value="973"/>
</dbReference>
<dbReference type="STRING" id="10090.ENSMUSP00000071513"/>
<dbReference type="BindingDB" id="P35377"/>
<dbReference type="ChEMBL" id="CHEMBL3621"/>
<dbReference type="GuidetoPHARMACOLOGY" id="320"/>
<dbReference type="GlyCosmos" id="P35377">
    <property type="glycosylation" value="3 sites, No reported glycans"/>
</dbReference>
<dbReference type="GlyGen" id="P35377">
    <property type="glycosylation" value="3 sites"/>
</dbReference>
<dbReference type="PhosphoSitePlus" id="P35377"/>
<dbReference type="SwissPalm" id="P35377"/>
<dbReference type="PaxDb" id="10090-ENSMUSP00000071513"/>
<dbReference type="Antibodypedia" id="29994">
    <property type="antibodies" value="226 antibodies from 29 providers"/>
</dbReference>
<dbReference type="DNASU" id="18389"/>
<dbReference type="Ensembl" id="ENSMUST00000071585.10">
    <molecule id="P35377-1"/>
    <property type="protein sequence ID" value="ENSMUSP00000071513.4"/>
    <property type="gene ID" value="ENSMUSG00000027584.18"/>
</dbReference>
<dbReference type="Ensembl" id="ENSMUST00000108766.2">
    <molecule id="P35377-6"/>
    <property type="protein sequence ID" value="ENSMUSP00000104397.2"/>
    <property type="gene ID" value="ENSMUSG00000027584.18"/>
</dbReference>
<dbReference type="Ensembl" id="ENSMUST00000108767.2">
    <molecule id="P35377-1"/>
    <property type="protein sequence ID" value="ENSMUSP00000104398.2"/>
    <property type="gene ID" value="ENSMUSG00000027584.18"/>
</dbReference>
<dbReference type="Ensembl" id="ENSMUST00000108768.8">
    <molecule id="P35377-1"/>
    <property type="protein sequence ID" value="ENSMUSP00000104399.2"/>
    <property type="gene ID" value="ENSMUSG00000027584.18"/>
</dbReference>
<dbReference type="Ensembl" id="ENSMUST00000183693.8">
    <molecule id="P35377-4"/>
    <property type="protein sequence ID" value="ENSMUSP00000138810.2"/>
    <property type="gene ID" value="ENSMUSG00000027584.18"/>
</dbReference>
<dbReference type="Ensembl" id="ENSMUST00000184127.2">
    <molecule id="P35377-3"/>
    <property type="protein sequence ID" value="ENSMUSP00000139119.2"/>
    <property type="gene ID" value="ENSMUSG00000027584.18"/>
</dbReference>
<dbReference type="GeneID" id="18389"/>
<dbReference type="KEGG" id="mmu:18389"/>
<dbReference type="UCSC" id="uc008onj.2">
    <molecule id="P35377-1"/>
    <property type="organism name" value="mouse"/>
</dbReference>
<dbReference type="UCSC" id="uc008ono.1">
    <molecule id="P35377-5"/>
    <property type="organism name" value="mouse"/>
</dbReference>
<dbReference type="UCSC" id="uc008onq.1">
    <molecule id="P35377-6"/>
    <property type="organism name" value="mouse"/>
</dbReference>
<dbReference type="AGR" id="MGI:97440"/>
<dbReference type="CTD" id="4987"/>
<dbReference type="MGI" id="MGI:97440">
    <property type="gene designation" value="Oprl1"/>
</dbReference>
<dbReference type="VEuPathDB" id="HostDB:ENSMUSG00000027584"/>
<dbReference type="eggNOG" id="KOG3656">
    <property type="taxonomic scope" value="Eukaryota"/>
</dbReference>
<dbReference type="GeneTree" id="ENSGT00940000160661"/>
<dbReference type="HOGENOM" id="CLU_009579_8_1_1"/>
<dbReference type="InParanoid" id="P35377"/>
<dbReference type="OMA" id="VNICIWA"/>
<dbReference type="OrthoDB" id="6076970at2759"/>
<dbReference type="PhylomeDB" id="P35377"/>
<dbReference type="TreeFam" id="TF315737"/>
<dbReference type="Reactome" id="R-MMU-375276">
    <property type="pathway name" value="Peptide ligand-binding receptors"/>
</dbReference>
<dbReference type="Reactome" id="R-MMU-418594">
    <property type="pathway name" value="G alpha (i) signalling events"/>
</dbReference>
<dbReference type="BioGRID-ORCS" id="18389">
    <property type="hits" value="2 hits in 77 CRISPR screens"/>
</dbReference>
<dbReference type="ChiTaRS" id="Oprl1">
    <property type="organism name" value="mouse"/>
</dbReference>
<dbReference type="PRO" id="PR:P35377"/>
<dbReference type="Proteomes" id="UP000000589">
    <property type="component" value="Chromosome 2"/>
</dbReference>
<dbReference type="RNAct" id="P35377">
    <property type="molecule type" value="protein"/>
</dbReference>
<dbReference type="Bgee" id="ENSMUSG00000027584">
    <property type="expression patterns" value="Expressed in neural tube lateral wall and 128 other cell types or tissues"/>
</dbReference>
<dbReference type="ExpressionAtlas" id="P35377">
    <property type="expression patterns" value="baseline and differential"/>
</dbReference>
<dbReference type="GO" id="GO:0031410">
    <property type="term" value="C:cytoplasmic vesicle"/>
    <property type="evidence" value="ECO:0007669"/>
    <property type="project" value="UniProtKB-KW"/>
</dbReference>
<dbReference type="GO" id="GO:0005886">
    <property type="term" value="C:plasma membrane"/>
    <property type="evidence" value="ECO:0000250"/>
    <property type="project" value="UniProtKB"/>
</dbReference>
<dbReference type="GO" id="GO:0097060">
    <property type="term" value="C:synaptic membrane"/>
    <property type="evidence" value="ECO:0000316"/>
    <property type="project" value="MGI"/>
</dbReference>
<dbReference type="GO" id="GO:0004930">
    <property type="term" value="F:G protein-coupled receptor activity"/>
    <property type="evidence" value="ECO:0000250"/>
    <property type="project" value="UniProtKB"/>
</dbReference>
<dbReference type="GO" id="GO:0001626">
    <property type="term" value="F:nociceptin receptor activity"/>
    <property type="evidence" value="ECO:0000315"/>
    <property type="project" value="UniProtKB"/>
</dbReference>
<dbReference type="GO" id="GO:0007193">
    <property type="term" value="P:adenylate cyclase-inhibiting G protein-coupled receptor signaling pathway"/>
    <property type="evidence" value="ECO:0000250"/>
    <property type="project" value="UniProtKB"/>
</dbReference>
<dbReference type="GO" id="GO:0019722">
    <property type="term" value="P:calcium-mediated signaling"/>
    <property type="evidence" value="ECO:0007669"/>
    <property type="project" value="Ensembl"/>
</dbReference>
<dbReference type="GO" id="GO:0007270">
    <property type="term" value="P:neuron-neuron synaptic transmission"/>
    <property type="evidence" value="ECO:0000316"/>
    <property type="project" value="MGI"/>
</dbReference>
<dbReference type="GO" id="GO:0007200">
    <property type="term" value="P:phospholipase C-activating G protein-coupled receptor signaling pathway"/>
    <property type="evidence" value="ECO:0007669"/>
    <property type="project" value="Ensembl"/>
</dbReference>
<dbReference type="GO" id="GO:0019233">
    <property type="term" value="P:sensory perception of pain"/>
    <property type="evidence" value="ECO:0000315"/>
    <property type="project" value="UniProtKB"/>
</dbReference>
<dbReference type="CDD" id="cd15092">
    <property type="entry name" value="7tmA_NOFQ_opioid_R"/>
    <property type="match status" value="1"/>
</dbReference>
<dbReference type="FunFam" id="1.20.1070.10:FF:000014">
    <property type="entry name" value="Kappa-type opioid receptor 1"/>
    <property type="match status" value="1"/>
</dbReference>
<dbReference type="Gene3D" id="1.20.1070.10">
    <property type="entry name" value="Rhodopsin 7-helix transmembrane proteins"/>
    <property type="match status" value="1"/>
</dbReference>
<dbReference type="InterPro" id="IPR000276">
    <property type="entry name" value="GPCR_Rhodpsn"/>
</dbReference>
<dbReference type="InterPro" id="IPR017452">
    <property type="entry name" value="GPCR_Rhodpsn_7TM"/>
</dbReference>
<dbReference type="InterPro" id="IPR001418">
    <property type="entry name" value="Opioid_rcpt"/>
</dbReference>
<dbReference type="InterPro" id="IPR001420">
    <property type="entry name" value="X_opioid_rcpt"/>
</dbReference>
<dbReference type="PANTHER" id="PTHR24229">
    <property type="entry name" value="NEUROPEPTIDES RECEPTOR"/>
    <property type="match status" value="1"/>
</dbReference>
<dbReference type="PANTHER" id="PTHR24229:SF11">
    <property type="entry name" value="NOCICEPTIN RECEPTOR"/>
    <property type="match status" value="1"/>
</dbReference>
<dbReference type="Pfam" id="PF00001">
    <property type="entry name" value="7tm_1"/>
    <property type="match status" value="1"/>
</dbReference>
<dbReference type="PRINTS" id="PR00237">
    <property type="entry name" value="GPCRRHODOPSN"/>
</dbReference>
<dbReference type="PRINTS" id="PR00384">
    <property type="entry name" value="OPIOIDR"/>
</dbReference>
<dbReference type="PRINTS" id="PR00547">
    <property type="entry name" value="XOPIOIDR"/>
</dbReference>
<dbReference type="SMART" id="SM01381">
    <property type="entry name" value="7TM_GPCR_Srsx"/>
    <property type="match status" value="1"/>
</dbReference>
<dbReference type="SUPFAM" id="SSF81321">
    <property type="entry name" value="Family A G protein-coupled receptor-like"/>
    <property type="match status" value="1"/>
</dbReference>
<dbReference type="PROSITE" id="PS00237">
    <property type="entry name" value="G_PROTEIN_RECEP_F1_1"/>
    <property type="match status" value="1"/>
</dbReference>
<dbReference type="PROSITE" id="PS50262">
    <property type="entry name" value="G_PROTEIN_RECEP_F1_2"/>
    <property type="match status" value="1"/>
</dbReference>
<sequence>MESLFPAPFWEVLYGSHFQGNLSLLNETVPHHLLLNASHSAFLPLGLKVTIVGLYLAVCIGGLLGNCLVMYVILRHTKMKTATNIYIFNLALADTLVLLTLPFQGTDILLGFWPFGNALCKTVIAIDYYNMFTSTFTLTAMSVDRYVAICHPIRALDVRTSSKAQAVNVAIWALASVVGVPVAIMGSAQVEDEEIECLVEIPAPQDYWGPVFAICIFLFSFIIPVLIISVCYSLMIRRLRGVRLLSGSREKDRNLRRITRLVLVVVAVFVGCWTPVQVFVLVQGLGVQPGSETAVAILRFCTALGYVNSCLNPILYAFLDENFKACFRKFCCASALHREMQVSDRVRSIAKDVGLGCKTSETVPRPA</sequence>
<proteinExistence type="evidence at transcript level"/>
<reference key="1">
    <citation type="submission" date="1994-01" db="EMBL/GenBank/DDBJ databases">
        <authorList>
            <person name="Yasuda K."/>
            <person name="Jones E."/>
            <person name="Reisine T."/>
            <person name="Bell G.I."/>
        </authorList>
    </citation>
    <scope>NUCLEOTIDE SEQUENCE (ISOFORM KOR3)</scope>
    <source>
        <strain>C57BL/6N</strain>
        <tissue>Brain</tissue>
    </source>
</reference>
<reference key="2">
    <citation type="journal article" date="1994" name="Biochem. Biophys. Res. Commun.">
        <title>Structure and chromosomal mapping of genes for the mouse kappa-opioid receptor and an opioid receptor homologue (MOR-C).</title>
        <authorList>
            <person name="Nishi M."/>
            <person name="Takeshima H."/>
            <person name="Mori M."/>
            <person name="Nakagawara K."/>
            <person name="Takeuchi T."/>
        </authorList>
    </citation>
    <scope>NUCLEOTIDE SEQUENCE [GENOMIC DNA] (ISOFORM KOR3)</scope>
</reference>
<reference key="3">
    <citation type="journal article" date="1996" name="Mol. Pharmacol.">
        <title>Functional selectivity of orphanin FQ for its receptor coexpressed with potassium channel subunits in Xenopus laevis oocytes.</title>
        <authorList>
            <person name="Matthes H.W.D."/>
            <person name="Seward E.P."/>
            <person name="Kieffer B."/>
            <person name="North R.A."/>
        </authorList>
    </citation>
    <scope>NUCLEOTIDE SEQUENCE [MRNA] (ISOFORM KOR3)</scope>
    <scope>FUNCTION</scope>
    <scope>SUBCELLULAR LOCATION</scope>
    <source>
        <tissue>Brain</tissue>
    </source>
</reference>
<reference key="4">
    <citation type="submission" date="1996-07" db="EMBL/GenBank/DDBJ databases">
        <authorList>
            <person name="Pan Y.-X."/>
            <person name="Xu J."/>
            <person name="Pasternak G.W."/>
        </authorList>
    </citation>
    <scope>NUCLEOTIDE SEQUENCE (ISOFORM KOR3)</scope>
</reference>
<reference key="5">
    <citation type="journal article" date="1995" name="Mol. Pharmacol.">
        <title>Cloning and functional characterization through antisense mapping of a kappa 3-related opioid receptor.</title>
        <authorList>
            <person name="Pan Y.-X."/>
            <person name="Cheng J."/>
            <person name="Xu J."/>
            <person name="Rossi G."/>
            <person name="Jacobson E."/>
            <person name="Ryan-Moro J."/>
            <person name="Brooks A.I."/>
            <person name="Dean G.E."/>
            <person name="Standifer K.M."/>
            <person name="Pasternak G.W."/>
        </authorList>
    </citation>
    <scope>NUCLEOTIDE SEQUENCE [MRNA] (ISOFORM KOR3)</scope>
    <scope>FUNCTION</scope>
    <scope>SUBCELLULAR LOCATION</scope>
    <scope>TISSUE SPECIFICITY</scope>
</reference>
<reference key="6">
    <citation type="journal article" date="1998" name="FEBS Lett.">
        <title>Identification and differential regional expression of KOR-3/ORL-1 gene splice variants in mouse brain.</title>
        <authorList>
            <person name="Pan Y.-X."/>
            <person name="Xu J."/>
            <person name="Wan B.-L."/>
            <person name="Zuckerman A."/>
            <person name="Pasternak G.W."/>
        </authorList>
    </citation>
    <scope>NUCLEOTIDE SEQUENCE [MRNA] (ISOFORMS KOR3A; KOR3B; KOR3C; KOR3D AND KOR3E)</scope>
    <scope>TISSUE SPECIFICITY</scope>
    <source>
        <strain>C57BL/6J</strain>
        <tissue>Brain</tissue>
    </source>
</reference>
<reference key="7">
    <citation type="journal article" date="2004" name="Genome Res.">
        <title>The status, quality, and expansion of the NIH full-length cDNA project: the Mammalian Gene Collection (MGC).</title>
        <authorList>
            <consortium name="The MGC Project Team"/>
        </authorList>
    </citation>
    <scope>NUCLEOTIDE SEQUENCE [LARGE SCALE MRNA] (ISOFORM KOR3)</scope>
    <source>
        <strain>C57BL/6J</strain>
        <tissue>Brain</tissue>
    </source>
</reference>
<reference key="8">
    <citation type="journal article" date="1995" name="J. Neuroimmunol.">
        <title>Functional role and sequence analysis of a lymphocyte orphan opioid receptor.</title>
        <authorList>
            <person name="Halford W.P."/>
            <person name="Gebhardt B.M."/>
            <person name="Carr D.J.J."/>
        </authorList>
    </citation>
    <scope>NUCLEOTIDE SEQUENCE [MRNA] OF 1-357 (ISOFORM KOR3)</scope>
    <scope>TISSUE SPECIFICITY</scope>
    <source>
        <strain>BALB/cJ</strain>
        <tissue>Spleen</tissue>
    </source>
</reference>
<reference key="9">
    <citation type="journal article" date="1997" name="EMBO J.">
        <title>Unrestrained nociceptive response and disregulation of hearing ability in mice lacking the nociceptin/orphaninFQ receptor.</title>
        <authorList>
            <person name="Nishi M."/>
            <person name="Houtani T."/>
            <person name="Noda Y."/>
            <person name="Mamiya T."/>
            <person name="Sato K."/>
            <person name="Doi T."/>
            <person name="Kuno J."/>
            <person name="Takeshima H."/>
            <person name="Nukada T."/>
            <person name="Nabeshima T."/>
            <person name="Yamashita T."/>
            <person name="Noda T."/>
            <person name="Sugimoto T."/>
        </authorList>
    </citation>
    <scope>DISRUPTION PHENOTYPE</scope>
</reference>
<reference key="10">
    <citation type="journal article" date="2002" name="Peptides">
        <title>Lack of the nociceptin receptor does not affect acute or chronic nociception in mice.</title>
        <authorList>
            <person name="Bertorelli R."/>
            <person name="Bastia E."/>
            <person name="Citterio F."/>
            <person name="Corradini L."/>
            <person name="Forlani A."/>
            <person name="Ongini E."/>
        </authorList>
    </citation>
    <scope>DISRUPTION PHENOTYPE</scope>
    <scope>FUNCTION</scope>
</reference>
<reference key="11">
    <citation type="journal article" date="2003" name="Eur. J. Neurosci.">
        <title>Normal sensitivity to acute pain, but increased inflammatory hyperalgesia in mice lacking the nociceptin precursor polypeptide or the nociceptin receptor.</title>
        <authorList>
            <person name="Depner U.B."/>
            <person name="Reinscheid R.K."/>
            <person name="Takeshima H."/>
            <person name="Brune K."/>
            <person name="Zeilhofer H.U."/>
        </authorList>
    </citation>
    <scope>DISRUPTION PHENOTYPE</scope>
    <scope>FUNCTION</scope>
</reference>
<reference key="12">
    <citation type="journal article" date="2013" name="J. Pharmacol. Exp. Ther.">
        <title>Effects of spinally administered bifunctional nociceptin/orphanin FQ peptide receptor/mu-opioid receptor ligands in mouse models of neuropathic and inflammatory pain.</title>
        <authorList>
            <person name="Sukhtankar D.D."/>
            <person name="Zaveri N.T."/>
            <person name="Husbands S.M."/>
            <person name="Ko M.C."/>
        </authorList>
    </citation>
    <scope>FUNCTION</scope>
</reference>
<protein>
    <recommendedName>
        <fullName>Nociceptin receptor</fullName>
    </recommendedName>
    <alternativeName>
        <fullName>K3 opiate receptor</fullName>
    </alternativeName>
    <alternativeName>
        <fullName>Kappa-type 3 opioid receptor</fullName>
        <shortName>KOR-3</shortName>
    </alternativeName>
    <alternativeName>
        <fullName>ORGC</fullName>
    </alternativeName>
    <alternativeName>
        <fullName>Orphanin FQ receptor</fullName>
    </alternativeName>
</protein>
<gene>
    <name type="primary">Oprl1</name>
    <name type="synonym">Oor</name>
    <name type="synonym">Oprl</name>
</gene>
<organism>
    <name type="scientific">Mus musculus</name>
    <name type="common">Mouse</name>
    <dbReference type="NCBI Taxonomy" id="10090"/>
    <lineage>
        <taxon>Eukaryota</taxon>
        <taxon>Metazoa</taxon>
        <taxon>Chordata</taxon>
        <taxon>Craniata</taxon>
        <taxon>Vertebrata</taxon>
        <taxon>Euteleostomi</taxon>
        <taxon>Mammalia</taxon>
        <taxon>Eutheria</taxon>
        <taxon>Euarchontoglires</taxon>
        <taxon>Glires</taxon>
        <taxon>Rodentia</taxon>
        <taxon>Myomorpha</taxon>
        <taxon>Muroidea</taxon>
        <taxon>Muridae</taxon>
        <taxon>Murinae</taxon>
        <taxon>Mus</taxon>
        <taxon>Mus</taxon>
    </lineage>
</organism>
<feature type="chain" id="PRO_0000069981" description="Nociceptin receptor">
    <location>
        <begin position="1"/>
        <end position="367"/>
    </location>
</feature>
<feature type="topological domain" description="Extracellular" evidence="1">
    <location>
        <begin position="1"/>
        <end position="45"/>
    </location>
</feature>
<feature type="transmembrane region" description="Helical; Name=1" evidence="1">
    <location>
        <begin position="46"/>
        <end position="71"/>
    </location>
</feature>
<feature type="topological domain" description="Cytoplasmic" evidence="1">
    <location>
        <begin position="72"/>
        <end position="84"/>
    </location>
</feature>
<feature type="transmembrane region" description="Helical; Name=2" evidence="1">
    <location>
        <begin position="85"/>
        <end position="106"/>
    </location>
</feature>
<feature type="topological domain" description="Extracellular" evidence="1">
    <location>
        <begin position="107"/>
        <end position="121"/>
    </location>
</feature>
<feature type="transmembrane region" description="Helical; Name=3" evidence="1">
    <location>
        <begin position="122"/>
        <end position="143"/>
    </location>
</feature>
<feature type="topological domain" description="Cytoplasmic" evidence="1">
    <location>
        <begin position="144"/>
        <end position="162"/>
    </location>
</feature>
<feature type="transmembrane region" description="Helical; Name=4" evidence="1">
    <location>
        <begin position="163"/>
        <end position="185"/>
    </location>
</feature>
<feature type="topological domain" description="Extracellular" evidence="1">
    <location>
        <begin position="186"/>
        <end position="208"/>
    </location>
</feature>
<feature type="transmembrane region" description="Helical; Name=5" evidence="1">
    <location>
        <begin position="209"/>
        <end position="233"/>
    </location>
</feature>
<feature type="topological domain" description="Cytoplasmic" evidence="1">
    <location>
        <begin position="234"/>
        <end position="261"/>
    </location>
</feature>
<feature type="transmembrane region" description="Helical; Name=6" evidence="1">
    <location>
        <begin position="262"/>
        <end position="282"/>
    </location>
</feature>
<feature type="topological domain" description="Extracellular" evidence="1">
    <location>
        <begin position="283"/>
        <end position="297"/>
    </location>
</feature>
<feature type="transmembrane region" description="Helical; Name=7" evidence="1">
    <location>
        <begin position="298"/>
        <end position="319"/>
    </location>
</feature>
<feature type="topological domain" description="Cytoplasmic" evidence="1">
    <location>
        <begin position="320"/>
        <end position="367"/>
    </location>
</feature>
<feature type="site" description="Important for G protein-mediated signaling" evidence="1">
    <location>
        <position position="107"/>
    </location>
</feature>
<feature type="site" description="Important for G protein-mediated signaling" evidence="1">
    <location>
        <position position="127"/>
    </location>
</feature>
<feature type="lipid moiety-binding region" description="S-palmitoyl cysteine" evidence="2">
    <location>
        <position position="331"/>
    </location>
</feature>
<feature type="glycosylation site" description="N-linked (GlcNAc...) asparagine" evidence="2">
    <location>
        <position position="21"/>
    </location>
</feature>
<feature type="glycosylation site" description="N-linked (GlcNAc...) asparagine" evidence="2">
    <location>
        <position position="26"/>
    </location>
</feature>
<feature type="glycosylation site" description="N-linked (GlcNAc...) asparagine" evidence="2">
    <location>
        <position position="36"/>
    </location>
</feature>
<feature type="disulfide bond" evidence="3">
    <location>
        <begin position="120"/>
        <end position="197"/>
    </location>
</feature>
<feature type="splice variant" id="VSP_001898" description="In isoform KOR3D." evidence="12">
    <location>
        <begin position="71"/>
        <end position="75"/>
    </location>
</feature>
<feature type="splice variant" id="VSP_001899" description="In isoform KOR3A." evidence="12">
    <original>RHTKMKTATNIYIFNLALADTLVLL</original>
    <variation>SWEGIEGNWRQQAHQDEDCYQHLHI</variation>
    <location>
        <begin position="75"/>
        <end position="99"/>
    </location>
</feature>
<feature type="splice variant" id="VSP_001903" description="In isoform KOR3B." evidence="12">
    <original>HTKMKTATNIYIFNLALADTLVLLTLPFQGTDILLG</original>
    <variation>QCPENPLRGVLRETEERRQHLSLLIPSTNSHSGTPR</variation>
    <location>
        <begin position="76"/>
        <end position="111"/>
    </location>
</feature>
<feature type="splice variant" id="VSP_001901" description="In isoform KOR3C." evidence="12">
    <original>HTKMKTATNIYIFNLALADT</original>
    <variation>QHCALGRSLMNFTGSALKTL</variation>
    <location>
        <begin position="76"/>
        <end position="95"/>
    </location>
</feature>
<feature type="splice variant" id="VSP_001902" description="In isoform KOR3C." evidence="12">
    <location>
        <begin position="96"/>
        <end position="367"/>
    </location>
</feature>
<feature type="splice variant" id="VSP_001900" description="In isoform KOR3A." evidence="12">
    <location>
        <begin position="100"/>
        <end position="367"/>
    </location>
</feature>
<feature type="splice variant" id="VSP_001904" description="In isoform KOR3B." evidence="12">
    <location>
        <begin position="112"/>
        <end position="367"/>
    </location>
</feature>
<feature type="splice variant" id="VSP_001905" description="In isoform KOR3E." evidence="12">
    <original>EIECLVEIPAPQDYWGPVFA</original>
    <variation>GQWAVLLPDQSVPHGSCRPL</variation>
    <location>
        <begin position="194"/>
        <end position="213"/>
    </location>
</feature>
<feature type="splice variant" id="VSP_001906" description="In isoform KOR3E." evidence="12">
    <location>
        <begin position="214"/>
        <end position="367"/>
    </location>
</feature>
<feature type="sequence conflict" description="In Ref. 2; AAA81333." evidence="13" ref="2">
    <original>SI</original>
    <variation>TV</variation>
    <location>
        <begin position="348"/>
        <end position="349"/>
    </location>
</feature>
<accession>P35377</accession>
<accession>Q60645</accession>
<accession>Q8VI74</accession>
<accession>Q9QUT5</accession>
<accession>Q9Z2M8</accession>
<accession>Q9Z2M9</accession>
<accession>Q9Z2N0</accession>
<comment type="function">
    <text evidence="4 5 6 7 9">G-protein coupled opioid receptor that functions as a receptor for the endogenous neuropeptide nociceptin. Ligand binding causes a conformation change that triggers signaling via guanine nucleotide-binding proteins (G proteins) and modulates the activity of down-stream effectors. Signaling via G proteins mediates inhibition of adenylate cyclase activity and calcium channel activity. Arrestins modulate signaling via G proteins and mediate the activation of alternative signaling pathways that lead to the activation of MAP kinases. Plays a role in modulating nociception and the perception of pain. Plays a role in the regulation of locomotor activity by the neuropeptide nociceptin.</text>
</comment>
<comment type="subcellular location">
    <subcellularLocation>
        <location>Cell membrane</location>
        <topology>Multi-pass membrane protein</topology>
    </subcellularLocation>
    <subcellularLocation>
        <location evidence="1">Cytoplasmic vesicle</location>
    </subcellularLocation>
    <text evidence="1">Ligand binding leads to receptor internalization into cytoplasmic vesicles, decreasing the amount of available receptor at the cell surface. Internalization requires phosphorylation at Ser-360. Can recycle to the cell membrane (By similarity).</text>
</comment>
<comment type="alternative products">
    <event type="alternative splicing"/>
    <isoform>
        <id>P35377-1</id>
        <name>KOR3</name>
        <sequence type="displayed"/>
    </isoform>
    <isoform>
        <id>P35377-2</id>
        <name>KOR3A</name>
        <sequence type="described" ref="VSP_001899 VSP_001900"/>
    </isoform>
    <isoform>
        <id>P35377-3</id>
        <name>KOR3B</name>
        <sequence type="described" ref="VSP_001903 VSP_001904"/>
    </isoform>
    <isoform>
        <id>P35377-4</id>
        <name>KOR3C</name>
        <sequence type="described" ref="VSP_001901 VSP_001902"/>
    </isoform>
    <isoform>
        <id>P35377-5</id>
        <name>KOR3D</name>
        <sequence type="described" ref="VSP_001898"/>
    </isoform>
    <isoform>
        <id>P35377-6</id>
        <name>KOR3E</name>
        <sequence type="described" ref="VSP_001905 VSP_001906"/>
    </isoform>
</comment>
<comment type="tissue specificity">
    <text evidence="7 8 11">In the brain, isoform KOR3 and isoform KOR3C are most abundant in hypothalamus and periaqueductal gray. Isoform KOR3A is highly expressed in cortex, striatum and brainstem. Isoform KOR3D is highly expressed in cerebellum, hypothalamus and brainstem. Detected in spleen lymphocytes.</text>
</comment>
<comment type="PTM">
    <text evidence="1">Phosphorylation at Ser-360 requires GRK3.</text>
</comment>
<comment type="disruption phenotype">
    <text evidence="4 5 10">Mutant mice do not show altered basal nociception, but are no longer susceptible to modulation of nociception by the neuropeptide nociceptin. Contrary to wild-type, they do not show reduced locomotion in response to the neuropeptide nociceptin. In addition, mutant mice show subtle hearing defects.</text>
</comment>
<comment type="similarity">
    <text evidence="3">Belongs to the G-protein coupled receptor 1 family.</text>
</comment>
<evidence type="ECO:0000250" key="1"/>
<evidence type="ECO:0000255" key="2"/>
<evidence type="ECO:0000255" key="3">
    <source>
        <dbReference type="PROSITE-ProRule" id="PRU00521"/>
    </source>
</evidence>
<evidence type="ECO:0000269" key="4">
    <source>
    </source>
</evidence>
<evidence type="ECO:0000269" key="5">
    <source>
    </source>
</evidence>
<evidence type="ECO:0000269" key="6">
    <source>
    </source>
</evidence>
<evidence type="ECO:0000269" key="7">
    <source>
    </source>
</evidence>
<evidence type="ECO:0000269" key="8">
    <source>
    </source>
</evidence>
<evidence type="ECO:0000269" key="9">
    <source>
    </source>
</evidence>
<evidence type="ECO:0000269" key="10">
    <source>
    </source>
</evidence>
<evidence type="ECO:0000269" key="11">
    <source>
    </source>
</evidence>
<evidence type="ECO:0000303" key="12">
    <source>
    </source>
</evidence>
<evidence type="ECO:0000305" key="13"/>
<keyword id="KW-0025">Alternative splicing</keyword>
<keyword id="KW-0085">Behavior</keyword>
<keyword id="KW-1003">Cell membrane</keyword>
<keyword id="KW-0968">Cytoplasmic vesicle</keyword>
<keyword id="KW-1015">Disulfide bond</keyword>
<keyword id="KW-0297">G-protein coupled receptor</keyword>
<keyword id="KW-0325">Glycoprotein</keyword>
<keyword id="KW-0449">Lipoprotein</keyword>
<keyword id="KW-0472">Membrane</keyword>
<keyword id="KW-0564">Palmitate</keyword>
<keyword id="KW-0597">Phosphoprotein</keyword>
<keyword id="KW-0675">Receptor</keyword>
<keyword id="KW-1185">Reference proteome</keyword>
<keyword id="KW-0807">Transducer</keyword>
<keyword id="KW-0812">Transmembrane</keyword>
<keyword id="KW-1133">Transmembrane helix</keyword>